<proteinExistence type="inferred from homology"/>
<feature type="chain" id="PRO_1000213444" description="Der GTPase-activating protein YihI">
    <location>
        <begin position="1"/>
        <end position="169"/>
    </location>
</feature>
<feature type="region of interest" description="Disordered" evidence="2">
    <location>
        <begin position="1"/>
        <end position="98"/>
    </location>
</feature>
<feature type="region of interest" description="Disordered" evidence="2">
    <location>
        <begin position="144"/>
        <end position="169"/>
    </location>
</feature>
<feature type="compositionally biased region" description="Basic residues" evidence="2">
    <location>
        <begin position="10"/>
        <end position="19"/>
    </location>
</feature>
<feature type="compositionally biased region" description="Basic and acidic residues" evidence="2">
    <location>
        <begin position="20"/>
        <end position="30"/>
    </location>
</feature>
<feature type="compositionally biased region" description="Basic residues" evidence="2">
    <location>
        <begin position="31"/>
        <end position="40"/>
    </location>
</feature>
<feature type="compositionally biased region" description="Polar residues" evidence="2">
    <location>
        <begin position="49"/>
        <end position="58"/>
    </location>
</feature>
<feature type="compositionally biased region" description="Acidic residues" evidence="2">
    <location>
        <begin position="147"/>
        <end position="159"/>
    </location>
</feature>
<feature type="compositionally biased region" description="Basic and acidic residues" evidence="2">
    <location>
        <begin position="160"/>
        <end position="169"/>
    </location>
</feature>
<organism>
    <name type="scientific">Escherichia coli (strain K12 / MC4100 / BW2952)</name>
    <dbReference type="NCBI Taxonomy" id="595496"/>
    <lineage>
        <taxon>Bacteria</taxon>
        <taxon>Pseudomonadati</taxon>
        <taxon>Pseudomonadota</taxon>
        <taxon>Gammaproteobacteria</taxon>
        <taxon>Enterobacterales</taxon>
        <taxon>Enterobacteriaceae</taxon>
        <taxon>Escherichia</taxon>
    </lineage>
</organism>
<comment type="function">
    <text evidence="1">A GTPase-activating protein (GAP) that modifies Der/EngA GTPase function. May play a role in ribosome biogenesis.</text>
</comment>
<comment type="subunit">
    <text evidence="1">Interacts with Der.</text>
</comment>
<comment type="similarity">
    <text evidence="1">Belongs to the YihI family.</text>
</comment>
<name>YIHI_ECOBW</name>
<keyword id="KW-0343">GTPase activation</keyword>
<keyword id="KW-0690">Ribosome biogenesis</keyword>
<dbReference type="EMBL" id="CP001396">
    <property type="protein sequence ID" value="ACR62553.1"/>
    <property type="molecule type" value="Genomic_DNA"/>
</dbReference>
<dbReference type="RefSeq" id="WP_001295266.1">
    <property type="nucleotide sequence ID" value="NC_012759.1"/>
</dbReference>
<dbReference type="SMR" id="C5A034"/>
<dbReference type="GeneID" id="75204333"/>
<dbReference type="KEGG" id="ebw:BWG_3536"/>
<dbReference type="HOGENOM" id="CLU_094104_2_0_6"/>
<dbReference type="GO" id="GO:0005096">
    <property type="term" value="F:GTPase activator activity"/>
    <property type="evidence" value="ECO:0007669"/>
    <property type="project" value="UniProtKB-KW"/>
</dbReference>
<dbReference type="GO" id="GO:0042254">
    <property type="term" value="P:ribosome biogenesis"/>
    <property type="evidence" value="ECO:0007669"/>
    <property type="project" value="UniProtKB-KW"/>
</dbReference>
<dbReference type="HAMAP" id="MF_01058">
    <property type="entry name" value="GAP_YihI"/>
    <property type="match status" value="1"/>
</dbReference>
<dbReference type="InterPro" id="IPR007336">
    <property type="entry name" value="YihI"/>
</dbReference>
<dbReference type="NCBIfam" id="NF003560">
    <property type="entry name" value="PRK05244.1-1"/>
    <property type="match status" value="1"/>
</dbReference>
<dbReference type="Pfam" id="PF04220">
    <property type="entry name" value="YihI"/>
    <property type="match status" value="1"/>
</dbReference>
<gene>
    <name evidence="1" type="primary">yihI</name>
    <name type="ordered locus">BWG_3536</name>
</gene>
<evidence type="ECO:0000255" key="1">
    <source>
        <dbReference type="HAMAP-Rule" id="MF_01058"/>
    </source>
</evidence>
<evidence type="ECO:0000256" key="2">
    <source>
        <dbReference type="SAM" id="MobiDB-lite"/>
    </source>
</evidence>
<sequence>MKPSSSNSRSKGHAKARRKTREELDQEARDRKRQKKRRGHAPGSRAAGGNTTSGSKGQNAPKDPRIGSKTPIPLGVTEKVTKQHKPKSEKPMLSPQAELELLETDERLDALLERLEAGETLSAEEQSWVDAKLDRIDELMQKLGLSYDDDEEEEEDEKQEDMMRLLRGN</sequence>
<accession>C5A034</accession>
<protein>
    <recommendedName>
        <fullName evidence="1">Der GTPase-activating protein YihI</fullName>
    </recommendedName>
</protein>
<reference key="1">
    <citation type="journal article" date="2009" name="J. Bacteriol.">
        <title>Genomic sequencing reveals regulatory mutations and recombinational events in the widely used MC4100 lineage of Escherichia coli K-12.</title>
        <authorList>
            <person name="Ferenci T."/>
            <person name="Zhou Z."/>
            <person name="Betteridge T."/>
            <person name="Ren Y."/>
            <person name="Liu Y."/>
            <person name="Feng L."/>
            <person name="Reeves P.R."/>
            <person name="Wang L."/>
        </authorList>
    </citation>
    <scope>NUCLEOTIDE SEQUENCE [LARGE SCALE GENOMIC DNA]</scope>
    <source>
        <strain>K12 / MC4100 / BW2952</strain>
    </source>
</reference>